<accession>Q1CT77</accession>
<dbReference type="EC" id="3.5.1.88" evidence="1"/>
<dbReference type="EMBL" id="CP000241">
    <property type="protein sequence ID" value="ABF84845.1"/>
    <property type="molecule type" value="Genomic_DNA"/>
</dbReference>
<dbReference type="RefSeq" id="WP_001185821.1">
    <property type="nucleotide sequence ID" value="NC_008086.1"/>
</dbReference>
<dbReference type="SMR" id="Q1CT77"/>
<dbReference type="KEGG" id="hpa:HPAG1_0778"/>
<dbReference type="HOGENOM" id="CLU_061901_2_0_7"/>
<dbReference type="GO" id="GO:0046872">
    <property type="term" value="F:metal ion binding"/>
    <property type="evidence" value="ECO:0007669"/>
    <property type="project" value="UniProtKB-KW"/>
</dbReference>
<dbReference type="GO" id="GO:0042586">
    <property type="term" value="F:peptide deformylase activity"/>
    <property type="evidence" value="ECO:0007669"/>
    <property type="project" value="UniProtKB-UniRule"/>
</dbReference>
<dbReference type="GO" id="GO:0043686">
    <property type="term" value="P:co-translational protein modification"/>
    <property type="evidence" value="ECO:0007669"/>
    <property type="project" value="TreeGrafter"/>
</dbReference>
<dbReference type="GO" id="GO:0006412">
    <property type="term" value="P:translation"/>
    <property type="evidence" value="ECO:0007669"/>
    <property type="project" value="UniProtKB-UniRule"/>
</dbReference>
<dbReference type="CDD" id="cd00487">
    <property type="entry name" value="Pep_deformylase"/>
    <property type="match status" value="1"/>
</dbReference>
<dbReference type="FunFam" id="3.90.45.10:FF:000008">
    <property type="entry name" value="Peptide deformylase"/>
    <property type="match status" value="1"/>
</dbReference>
<dbReference type="Gene3D" id="3.90.45.10">
    <property type="entry name" value="Peptide deformylase"/>
    <property type="match status" value="1"/>
</dbReference>
<dbReference type="HAMAP" id="MF_00163">
    <property type="entry name" value="Pep_deformylase"/>
    <property type="match status" value="1"/>
</dbReference>
<dbReference type="InterPro" id="IPR023635">
    <property type="entry name" value="Peptide_deformylase"/>
</dbReference>
<dbReference type="InterPro" id="IPR036821">
    <property type="entry name" value="Peptide_deformylase_sf"/>
</dbReference>
<dbReference type="NCBIfam" id="TIGR00079">
    <property type="entry name" value="pept_deformyl"/>
    <property type="match status" value="1"/>
</dbReference>
<dbReference type="NCBIfam" id="NF001159">
    <property type="entry name" value="PRK00150.1-3"/>
    <property type="match status" value="1"/>
</dbReference>
<dbReference type="PANTHER" id="PTHR10458">
    <property type="entry name" value="PEPTIDE DEFORMYLASE"/>
    <property type="match status" value="1"/>
</dbReference>
<dbReference type="PANTHER" id="PTHR10458:SF22">
    <property type="entry name" value="PEPTIDE DEFORMYLASE"/>
    <property type="match status" value="1"/>
</dbReference>
<dbReference type="Pfam" id="PF01327">
    <property type="entry name" value="Pep_deformylase"/>
    <property type="match status" value="1"/>
</dbReference>
<dbReference type="PIRSF" id="PIRSF004749">
    <property type="entry name" value="Pep_def"/>
    <property type="match status" value="1"/>
</dbReference>
<dbReference type="PRINTS" id="PR01576">
    <property type="entry name" value="PDEFORMYLASE"/>
</dbReference>
<dbReference type="SUPFAM" id="SSF56420">
    <property type="entry name" value="Peptide deformylase"/>
    <property type="match status" value="1"/>
</dbReference>
<feature type="chain" id="PRO_0000301039" description="Peptide deformylase">
    <location>
        <begin position="1"/>
        <end position="174"/>
    </location>
</feature>
<feature type="active site" evidence="1">
    <location>
        <position position="139"/>
    </location>
</feature>
<feature type="binding site" evidence="1">
    <location>
        <position position="96"/>
    </location>
    <ligand>
        <name>Fe cation</name>
        <dbReference type="ChEBI" id="CHEBI:24875"/>
    </ligand>
</feature>
<feature type="binding site" evidence="1">
    <location>
        <position position="138"/>
    </location>
    <ligand>
        <name>Fe cation</name>
        <dbReference type="ChEBI" id="CHEBI:24875"/>
    </ligand>
</feature>
<feature type="binding site" evidence="1">
    <location>
        <position position="142"/>
    </location>
    <ligand>
        <name>Fe cation</name>
        <dbReference type="ChEBI" id="CHEBI:24875"/>
    </ligand>
</feature>
<organism>
    <name type="scientific">Helicobacter pylori (strain HPAG1)</name>
    <dbReference type="NCBI Taxonomy" id="357544"/>
    <lineage>
        <taxon>Bacteria</taxon>
        <taxon>Pseudomonadati</taxon>
        <taxon>Campylobacterota</taxon>
        <taxon>Epsilonproteobacteria</taxon>
        <taxon>Campylobacterales</taxon>
        <taxon>Helicobacteraceae</taxon>
        <taxon>Helicobacter</taxon>
    </lineage>
</organism>
<proteinExistence type="inferred from homology"/>
<evidence type="ECO:0000255" key="1">
    <source>
        <dbReference type="HAMAP-Rule" id="MF_00163"/>
    </source>
</evidence>
<gene>
    <name evidence="1" type="primary">def</name>
    <name type="ordered locus">HPAG1_0778</name>
</gene>
<comment type="function">
    <text evidence="1">Removes the formyl group from the N-terminal Met of newly synthesized proteins. Requires at least a dipeptide for an efficient rate of reaction. N-terminal L-methionine is a prerequisite for activity but the enzyme has broad specificity at other positions.</text>
</comment>
<comment type="catalytic activity">
    <reaction evidence="1">
        <text>N-terminal N-formyl-L-methionyl-[peptide] + H2O = N-terminal L-methionyl-[peptide] + formate</text>
        <dbReference type="Rhea" id="RHEA:24420"/>
        <dbReference type="Rhea" id="RHEA-COMP:10639"/>
        <dbReference type="Rhea" id="RHEA-COMP:10640"/>
        <dbReference type="ChEBI" id="CHEBI:15377"/>
        <dbReference type="ChEBI" id="CHEBI:15740"/>
        <dbReference type="ChEBI" id="CHEBI:49298"/>
        <dbReference type="ChEBI" id="CHEBI:64731"/>
        <dbReference type="EC" id="3.5.1.88"/>
    </reaction>
</comment>
<comment type="cofactor">
    <cofactor evidence="1">
        <name>Fe(2+)</name>
        <dbReference type="ChEBI" id="CHEBI:29033"/>
    </cofactor>
    <text evidence="1">Binds 1 Fe(2+) ion.</text>
</comment>
<comment type="similarity">
    <text evidence="1">Belongs to the polypeptide deformylase family.</text>
</comment>
<keyword id="KW-0378">Hydrolase</keyword>
<keyword id="KW-0408">Iron</keyword>
<keyword id="KW-0479">Metal-binding</keyword>
<keyword id="KW-0648">Protein biosynthesis</keyword>
<sequence>MALLEIIHYPSKILRTISKEVVSFDAKLHQQLDDMHETMIASEGIGLAAIQVGLPLRMLIINLPREDGVQHKEDCLEIINPKFIETGGSMMYREGCLSVPGFYEEVERFEKVKIEYQNRFAEVKVLEASELLAVAIQHEIDHLNGVLFVDKLSILKRKKFEKELKELQKQQKHK</sequence>
<name>DEF_HELPH</name>
<protein>
    <recommendedName>
        <fullName evidence="1">Peptide deformylase</fullName>
        <shortName evidence="1">PDF</shortName>
        <ecNumber evidence="1">3.5.1.88</ecNumber>
    </recommendedName>
    <alternativeName>
        <fullName evidence="1">Polypeptide deformylase</fullName>
    </alternativeName>
</protein>
<reference key="1">
    <citation type="journal article" date="2006" name="Proc. Natl. Acad. Sci. U.S.A.">
        <title>The complete genome sequence of a chronic atrophic gastritis Helicobacter pylori strain: evolution during disease progression.</title>
        <authorList>
            <person name="Oh J.D."/>
            <person name="Kling-Baeckhed H."/>
            <person name="Giannakis M."/>
            <person name="Xu J."/>
            <person name="Fulton R.S."/>
            <person name="Fulton L.A."/>
            <person name="Cordum H.S."/>
            <person name="Wang C."/>
            <person name="Elliott G."/>
            <person name="Edwards J."/>
            <person name="Mardis E.R."/>
            <person name="Engstrand L.G."/>
            <person name="Gordon J.I."/>
        </authorList>
    </citation>
    <scope>NUCLEOTIDE SEQUENCE [LARGE SCALE GENOMIC DNA]</scope>
    <source>
        <strain>HPAG1</strain>
    </source>
</reference>